<name>GLYA_AERS4</name>
<evidence type="ECO:0000255" key="1">
    <source>
        <dbReference type="HAMAP-Rule" id="MF_00051"/>
    </source>
</evidence>
<keyword id="KW-0028">Amino-acid biosynthesis</keyword>
<keyword id="KW-0963">Cytoplasm</keyword>
<keyword id="KW-0554">One-carbon metabolism</keyword>
<keyword id="KW-0663">Pyridoxal phosphate</keyword>
<keyword id="KW-0808">Transferase</keyword>
<comment type="function">
    <text evidence="1">Catalyzes the reversible interconversion of serine and glycine with tetrahydrofolate (THF) serving as the one-carbon carrier. This reaction serves as the major source of one-carbon groups required for the biosynthesis of purines, thymidylate, methionine, and other important biomolecules. Also exhibits THF-independent aldolase activity toward beta-hydroxyamino acids, producing glycine and aldehydes, via a retro-aldol mechanism.</text>
</comment>
<comment type="catalytic activity">
    <reaction evidence="1">
        <text>(6R)-5,10-methylene-5,6,7,8-tetrahydrofolate + glycine + H2O = (6S)-5,6,7,8-tetrahydrofolate + L-serine</text>
        <dbReference type="Rhea" id="RHEA:15481"/>
        <dbReference type="ChEBI" id="CHEBI:15377"/>
        <dbReference type="ChEBI" id="CHEBI:15636"/>
        <dbReference type="ChEBI" id="CHEBI:33384"/>
        <dbReference type="ChEBI" id="CHEBI:57305"/>
        <dbReference type="ChEBI" id="CHEBI:57453"/>
        <dbReference type="EC" id="2.1.2.1"/>
    </reaction>
</comment>
<comment type="cofactor">
    <cofactor evidence="1">
        <name>pyridoxal 5'-phosphate</name>
        <dbReference type="ChEBI" id="CHEBI:597326"/>
    </cofactor>
</comment>
<comment type="pathway">
    <text evidence="1">One-carbon metabolism; tetrahydrofolate interconversion.</text>
</comment>
<comment type="pathway">
    <text evidence="1">Amino-acid biosynthesis; glycine biosynthesis; glycine from L-serine: step 1/1.</text>
</comment>
<comment type="subunit">
    <text evidence="1">Homodimer.</text>
</comment>
<comment type="subcellular location">
    <subcellularLocation>
        <location evidence="1">Cytoplasm</location>
    </subcellularLocation>
</comment>
<comment type="similarity">
    <text evidence="1">Belongs to the SHMT family.</text>
</comment>
<gene>
    <name evidence="1" type="primary">glyA</name>
    <name type="ordered locus">ASA_0975</name>
</gene>
<organism>
    <name type="scientific">Aeromonas salmonicida (strain A449)</name>
    <dbReference type="NCBI Taxonomy" id="382245"/>
    <lineage>
        <taxon>Bacteria</taxon>
        <taxon>Pseudomonadati</taxon>
        <taxon>Pseudomonadota</taxon>
        <taxon>Gammaproteobacteria</taxon>
        <taxon>Aeromonadales</taxon>
        <taxon>Aeromonadaceae</taxon>
        <taxon>Aeromonas</taxon>
    </lineage>
</organism>
<feature type="chain" id="PRO_1000006214" description="Serine hydroxymethyltransferase">
    <location>
        <begin position="1"/>
        <end position="417"/>
    </location>
</feature>
<feature type="binding site" evidence="1">
    <location>
        <position position="121"/>
    </location>
    <ligand>
        <name>(6S)-5,6,7,8-tetrahydrofolate</name>
        <dbReference type="ChEBI" id="CHEBI:57453"/>
    </ligand>
</feature>
<feature type="binding site" evidence="1">
    <location>
        <begin position="125"/>
        <end position="127"/>
    </location>
    <ligand>
        <name>(6S)-5,6,7,8-tetrahydrofolate</name>
        <dbReference type="ChEBI" id="CHEBI:57453"/>
    </ligand>
</feature>
<feature type="binding site" evidence="1">
    <location>
        <begin position="355"/>
        <end position="357"/>
    </location>
    <ligand>
        <name>(6S)-5,6,7,8-tetrahydrofolate</name>
        <dbReference type="ChEBI" id="CHEBI:57453"/>
    </ligand>
</feature>
<feature type="site" description="Plays an important role in substrate specificity" evidence="1">
    <location>
        <position position="228"/>
    </location>
</feature>
<feature type="modified residue" description="N6-(pyridoxal phosphate)lysine" evidence="1">
    <location>
        <position position="229"/>
    </location>
</feature>
<accession>A4SJN4</accession>
<sequence length="417" mass="45636">MLKRDMTIANYDPQLWQAITDETRRQEEHIELIASENYTSPRVMEAQGSQLTNKYAEGYPAKRYYGGCEYVDVVETLAIERAKELFGATYANVQPHSGSQANSAVYMALLQPGDTVLGMNLAHGGHLTHGSPVNFSGKLYNIIPYGIDESGKIDYDEMERLAVEHKPKMMIGGFSAYSGIVDWARMREIADKIGAWLFVDMAHVAGLIAAGVYPNPVPHAHVVTSTTHKTLAGPRGGLILSAADDEDLYKKLNSAVFPGGQGGPLMHVIAGKAVAFKEALEPEFKTYQAQVVKNAKAMAATFIERGYKIVSGGTDNHLMLVDLIGRELTGKEADAALGKANITVNKNSVPNDPRSPFVTSGVRIGTPAITRRGFKEAESIHLTNWICDVLDNHDNDEVLANTREKVLDICRRFPVYA</sequence>
<reference key="1">
    <citation type="journal article" date="2008" name="BMC Genomics">
        <title>The genome of Aeromonas salmonicida subsp. salmonicida A449: insights into the evolution of a fish pathogen.</title>
        <authorList>
            <person name="Reith M.E."/>
            <person name="Singh R.K."/>
            <person name="Curtis B."/>
            <person name="Boyd J.M."/>
            <person name="Bouevitch A."/>
            <person name="Kimball J."/>
            <person name="Munholland J."/>
            <person name="Murphy C."/>
            <person name="Sarty D."/>
            <person name="Williams J."/>
            <person name="Nash J.H."/>
            <person name="Johnson S.C."/>
            <person name="Brown L.L."/>
        </authorList>
    </citation>
    <scope>NUCLEOTIDE SEQUENCE [LARGE SCALE GENOMIC DNA]</scope>
    <source>
        <strain>A449</strain>
    </source>
</reference>
<dbReference type="EC" id="2.1.2.1" evidence="1"/>
<dbReference type="EMBL" id="CP000644">
    <property type="protein sequence ID" value="ABO89106.1"/>
    <property type="molecule type" value="Genomic_DNA"/>
</dbReference>
<dbReference type="RefSeq" id="WP_005317611.1">
    <property type="nucleotide sequence ID" value="NC_009348.1"/>
</dbReference>
<dbReference type="SMR" id="A4SJN4"/>
<dbReference type="STRING" id="29491.GCA_000820065_01209"/>
<dbReference type="GeneID" id="79878637"/>
<dbReference type="KEGG" id="asa:ASA_0975"/>
<dbReference type="eggNOG" id="COG0112">
    <property type="taxonomic scope" value="Bacteria"/>
</dbReference>
<dbReference type="HOGENOM" id="CLU_022477_2_1_6"/>
<dbReference type="UniPathway" id="UPA00193"/>
<dbReference type="UniPathway" id="UPA00288">
    <property type="reaction ID" value="UER01023"/>
</dbReference>
<dbReference type="Proteomes" id="UP000000225">
    <property type="component" value="Chromosome"/>
</dbReference>
<dbReference type="GO" id="GO:0005829">
    <property type="term" value="C:cytosol"/>
    <property type="evidence" value="ECO:0007669"/>
    <property type="project" value="TreeGrafter"/>
</dbReference>
<dbReference type="GO" id="GO:0004372">
    <property type="term" value="F:glycine hydroxymethyltransferase activity"/>
    <property type="evidence" value="ECO:0007669"/>
    <property type="project" value="UniProtKB-UniRule"/>
</dbReference>
<dbReference type="GO" id="GO:0030170">
    <property type="term" value="F:pyridoxal phosphate binding"/>
    <property type="evidence" value="ECO:0007669"/>
    <property type="project" value="UniProtKB-UniRule"/>
</dbReference>
<dbReference type="GO" id="GO:0019264">
    <property type="term" value="P:glycine biosynthetic process from serine"/>
    <property type="evidence" value="ECO:0007669"/>
    <property type="project" value="UniProtKB-UniRule"/>
</dbReference>
<dbReference type="GO" id="GO:0035999">
    <property type="term" value="P:tetrahydrofolate interconversion"/>
    <property type="evidence" value="ECO:0007669"/>
    <property type="project" value="UniProtKB-UniRule"/>
</dbReference>
<dbReference type="CDD" id="cd00378">
    <property type="entry name" value="SHMT"/>
    <property type="match status" value="1"/>
</dbReference>
<dbReference type="FunFam" id="3.40.640.10:FF:000001">
    <property type="entry name" value="Serine hydroxymethyltransferase"/>
    <property type="match status" value="1"/>
</dbReference>
<dbReference type="FunFam" id="3.90.1150.10:FF:000003">
    <property type="entry name" value="Serine hydroxymethyltransferase"/>
    <property type="match status" value="1"/>
</dbReference>
<dbReference type="Gene3D" id="3.90.1150.10">
    <property type="entry name" value="Aspartate Aminotransferase, domain 1"/>
    <property type="match status" value="1"/>
</dbReference>
<dbReference type="Gene3D" id="3.40.640.10">
    <property type="entry name" value="Type I PLP-dependent aspartate aminotransferase-like (Major domain)"/>
    <property type="match status" value="1"/>
</dbReference>
<dbReference type="HAMAP" id="MF_00051">
    <property type="entry name" value="SHMT"/>
    <property type="match status" value="1"/>
</dbReference>
<dbReference type="InterPro" id="IPR015424">
    <property type="entry name" value="PyrdxlP-dep_Trfase"/>
</dbReference>
<dbReference type="InterPro" id="IPR015421">
    <property type="entry name" value="PyrdxlP-dep_Trfase_major"/>
</dbReference>
<dbReference type="InterPro" id="IPR015422">
    <property type="entry name" value="PyrdxlP-dep_Trfase_small"/>
</dbReference>
<dbReference type="InterPro" id="IPR001085">
    <property type="entry name" value="Ser_HO-MeTrfase"/>
</dbReference>
<dbReference type="InterPro" id="IPR049943">
    <property type="entry name" value="Ser_HO-MeTrfase-like"/>
</dbReference>
<dbReference type="InterPro" id="IPR019798">
    <property type="entry name" value="Ser_HO-MeTrfase_PLP_BS"/>
</dbReference>
<dbReference type="InterPro" id="IPR039429">
    <property type="entry name" value="SHMT-like_dom"/>
</dbReference>
<dbReference type="NCBIfam" id="NF000586">
    <property type="entry name" value="PRK00011.1"/>
    <property type="match status" value="1"/>
</dbReference>
<dbReference type="PANTHER" id="PTHR11680">
    <property type="entry name" value="SERINE HYDROXYMETHYLTRANSFERASE"/>
    <property type="match status" value="1"/>
</dbReference>
<dbReference type="PANTHER" id="PTHR11680:SF50">
    <property type="entry name" value="SERINE HYDROXYMETHYLTRANSFERASE"/>
    <property type="match status" value="1"/>
</dbReference>
<dbReference type="Pfam" id="PF00464">
    <property type="entry name" value="SHMT"/>
    <property type="match status" value="1"/>
</dbReference>
<dbReference type="PIRSF" id="PIRSF000412">
    <property type="entry name" value="SHMT"/>
    <property type="match status" value="1"/>
</dbReference>
<dbReference type="SUPFAM" id="SSF53383">
    <property type="entry name" value="PLP-dependent transferases"/>
    <property type="match status" value="1"/>
</dbReference>
<dbReference type="PROSITE" id="PS00096">
    <property type="entry name" value="SHMT"/>
    <property type="match status" value="1"/>
</dbReference>
<proteinExistence type="inferred from homology"/>
<protein>
    <recommendedName>
        <fullName evidence="1">Serine hydroxymethyltransferase</fullName>
        <shortName evidence="1">SHMT</shortName>
        <shortName evidence="1">Serine methylase</shortName>
        <ecNumber evidence="1">2.1.2.1</ecNumber>
    </recommendedName>
</protein>